<sequence length="273" mass="30446">MNNRVHQGHLARKRFGQNFLNDQFVIDSIVSAINPQKGQAMVEIGPGLAALTEPVGERLDQLTVIELDRDLAARLQTHPFLGPKLTIYQQDAMTFNFGELAEKMGQPLRVFGNLPYNISTPLMFHLFSYTDAIADMHFMLQKEVVNRLVAGPNSKAYGRLSVMAQYYCNVIPVLEVPPSAFTPPPKVDSAVVRLVPHATMPYPVKDVRVLSRITTEAFNQRRKTIRNSLGNLFSVEVLTGMGIDPAMRAENISVAQYCQMANYLAENAPLQES</sequence>
<dbReference type="EC" id="2.1.1.182" evidence="1"/>
<dbReference type="EMBL" id="CU928158">
    <property type="protein sequence ID" value="CAQ87648.1"/>
    <property type="molecule type" value="Genomic_DNA"/>
</dbReference>
<dbReference type="RefSeq" id="WP_001065388.1">
    <property type="nucleotide sequence ID" value="NC_011740.1"/>
</dbReference>
<dbReference type="SMR" id="B7LVU5"/>
<dbReference type="GeneID" id="75058850"/>
<dbReference type="KEGG" id="efe:EFER_0062"/>
<dbReference type="HOGENOM" id="CLU_041220_0_1_6"/>
<dbReference type="OrthoDB" id="9814755at2"/>
<dbReference type="Proteomes" id="UP000000745">
    <property type="component" value="Chromosome"/>
</dbReference>
<dbReference type="GO" id="GO:0005829">
    <property type="term" value="C:cytosol"/>
    <property type="evidence" value="ECO:0007669"/>
    <property type="project" value="TreeGrafter"/>
</dbReference>
<dbReference type="GO" id="GO:0052908">
    <property type="term" value="F:16S rRNA (adenine(1518)-N(6)/adenine(1519)-N(6))-dimethyltransferase activity"/>
    <property type="evidence" value="ECO:0007669"/>
    <property type="project" value="UniProtKB-EC"/>
</dbReference>
<dbReference type="GO" id="GO:0003723">
    <property type="term" value="F:RNA binding"/>
    <property type="evidence" value="ECO:0007669"/>
    <property type="project" value="UniProtKB-KW"/>
</dbReference>
<dbReference type="FunFam" id="1.10.8.100:FF:000001">
    <property type="entry name" value="Ribosomal RNA small subunit methyltransferase A"/>
    <property type="match status" value="1"/>
</dbReference>
<dbReference type="FunFam" id="3.40.50.150:FF:000006">
    <property type="entry name" value="Ribosomal RNA small subunit methyltransferase A"/>
    <property type="match status" value="1"/>
</dbReference>
<dbReference type="Gene3D" id="1.10.8.100">
    <property type="entry name" value="Ribosomal RNA adenine dimethylase-like, domain 2"/>
    <property type="match status" value="1"/>
</dbReference>
<dbReference type="Gene3D" id="3.40.50.150">
    <property type="entry name" value="Vaccinia Virus protein VP39"/>
    <property type="match status" value="1"/>
</dbReference>
<dbReference type="HAMAP" id="MF_00607">
    <property type="entry name" value="16SrRNA_methyltr_A"/>
    <property type="match status" value="1"/>
</dbReference>
<dbReference type="InterPro" id="IPR001737">
    <property type="entry name" value="KsgA/Erm"/>
</dbReference>
<dbReference type="InterPro" id="IPR023165">
    <property type="entry name" value="rRNA_Ade_diMease-like_C"/>
</dbReference>
<dbReference type="InterPro" id="IPR020596">
    <property type="entry name" value="rRNA_Ade_Mease_Trfase_CS"/>
</dbReference>
<dbReference type="InterPro" id="IPR020598">
    <property type="entry name" value="rRNA_Ade_methylase_Trfase_N"/>
</dbReference>
<dbReference type="InterPro" id="IPR011530">
    <property type="entry name" value="rRNA_adenine_dimethylase"/>
</dbReference>
<dbReference type="InterPro" id="IPR029063">
    <property type="entry name" value="SAM-dependent_MTases_sf"/>
</dbReference>
<dbReference type="NCBIfam" id="TIGR00755">
    <property type="entry name" value="ksgA"/>
    <property type="match status" value="1"/>
</dbReference>
<dbReference type="PANTHER" id="PTHR11727">
    <property type="entry name" value="DIMETHYLADENOSINE TRANSFERASE"/>
    <property type="match status" value="1"/>
</dbReference>
<dbReference type="PANTHER" id="PTHR11727:SF7">
    <property type="entry name" value="DIMETHYLADENOSINE TRANSFERASE-RELATED"/>
    <property type="match status" value="1"/>
</dbReference>
<dbReference type="Pfam" id="PF00398">
    <property type="entry name" value="RrnaAD"/>
    <property type="match status" value="1"/>
</dbReference>
<dbReference type="SMART" id="SM00650">
    <property type="entry name" value="rADc"/>
    <property type="match status" value="1"/>
</dbReference>
<dbReference type="SUPFAM" id="SSF53335">
    <property type="entry name" value="S-adenosyl-L-methionine-dependent methyltransferases"/>
    <property type="match status" value="1"/>
</dbReference>
<dbReference type="PROSITE" id="PS01131">
    <property type="entry name" value="RRNA_A_DIMETH"/>
    <property type="match status" value="1"/>
</dbReference>
<dbReference type="PROSITE" id="PS51689">
    <property type="entry name" value="SAM_RNA_A_N6_MT"/>
    <property type="match status" value="1"/>
</dbReference>
<feature type="chain" id="PRO_1000130278" description="Ribosomal RNA small subunit methyltransferase A">
    <location>
        <begin position="1"/>
        <end position="273"/>
    </location>
</feature>
<feature type="binding site" evidence="1">
    <location>
        <position position="18"/>
    </location>
    <ligand>
        <name>S-adenosyl-L-methionine</name>
        <dbReference type="ChEBI" id="CHEBI:59789"/>
    </ligand>
</feature>
<feature type="binding site" evidence="1">
    <location>
        <position position="20"/>
    </location>
    <ligand>
        <name>S-adenosyl-L-methionine</name>
        <dbReference type="ChEBI" id="CHEBI:59789"/>
    </ligand>
</feature>
<feature type="binding site" evidence="1">
    <location>
        <position position="45"/>
    </location>
    <ligand>
        <name>S-adenosyl-L-methionine</name>
        <dbReference type="ChEBI" id="CHEBI:59789"/>
    </ligand>
</feature>
<feature type="binding site" evidence="1">
    <location>
        <position position="66"/>
    </location>
    <ligand>
        <name>S-adenosyl-L-methionine</name>
        <dbReference type="ChEBI" id="CHEBI:59789"/>
    </ligand>
</feature>
<feature type="binding site" evidence="1">
    <location>
        <position position="91"/>
    </location>
    <ligand>
        <name>S-adenosyl-L-methionine</name>
        <dbReference type="ChEBI" id="CHEBI:59789"/>
    </ligand>
</feature>
<feature type="binding site" evidence="1">
    <location>
        <position position="113"/>
    </location>
    <ligand>
        <name>S-adenosyl-L-methionine</name>
        <dbReference type="ChEBI" id="CHEBI:59789"/>
    </ligand>
</feature>
<comment type="function">
    <text evidence="1">Specifically dimethylates two adjacent adenosines (A1518 and A1519) in the loop of a conserved hairpin near the 3'-end of 16S rRNA in the 30S particle. May play a critical role in biogenesis of 30S subunits.</text>
</comment>
<comment type="catalytic activity">
    <reaction evidence="1">
        <text>adenosine(1518)/adenosine(1519) in 16S rRNA + 4 S-adenosyl-L-methionine = N(6)-dimethyladenosine(1518)/N(6)-dimethyladenosine(1519) in 16S rRNA + 4 S-adenosyl-L-homocysteine + 4 H(+)</text>
        <dbReference type="Rhea" id="RHEA:19609"/>
        <dbReference type="Rhea" id="RHEA-COMP:10232"/>
        <dbReference type="Rhea" id="RHEA-COMP:10233"/>
        <dbReference type="ChEBI" id="CHEBI:15378"/>
        <dbReference type="ChEBI" id="CHEBI:57856"/>
        <dbReference type="ChEBI" id="CHEBI:59789"/>
        <dbReference type="ChEBI" id="CHEBI:74411"/>
        <dbReference type="ChEBI" id="CHEBI:74493"/>
        <dbReference type="EC" id="2.1.1.182"/>
    </reaction>
</comment>
<comment type="subcellular location">
    <subcellularLocation>
        <location evidence="1">Cytoplasm</location>
    </subcellularLocation>
</comment>
<comment type="similarity">
    <text evidence="1">Belongs to the class I-like SAM-binding methyltransferase superfamily. rRNA adenine N(6)-methyltransferase family. RsmA subfamily.</text>
</comment>
<evidence type="ECO:0000255" key="1">
    <source>
        <dbReference type="HAMAP-Rule" id="MF_00607"/>
    </source>
</evidence>
<proteinExistence type="inferred from homology"/>
<accession>B7LVU5</accession>
<name>RSMA_ESCF3</name>
<protein>
    <recommendedName>
        <fullName evidence="1">Ribosomal RNA small subunit methyltransferase A</fullName>
        <ecNumber evidence="1">2.1.1.182</ecNumber>
    </recommendedName>
    <alternativeName>
        <fullName evidence="1">16S rRNA (adenine(1518)-N(6)/adenine(1519)-N(6))-dimethyltransferase</fullName>
    </alternativeName>
    <alternativeName>
        <fullName evidence="1">16S rRNA dimethyladenosine transferase</fullName>
    </alternativeName>
    <alternativeName>
        <fullName evidence="1">16S rRNA dimethylase</fullName>
    </alternativeName>
    <alternativeName>
        <fullName evidence="1">S-adenosylmethionine-6-N', N'-adenosyl(rRNA) dimethyltransferase</fullName>
    </alternativeName>
</protein>
<reference key="1">
    <citation type="journal article" date="2009" name="PLoS Genet.">
        <title>Organised genome dynamics in the Escherichia coli species results in highly diverse adaptive paths.</title>
        <authorList>
            <person name="Touchon M."/>
            <person name="Hoede C."/>
            <person name="Tenaillon O."/>
            <person name="Barbe V."/>
            <person name="Baeriswyl S."/>
            <person name="Bidet P."/>
            <person name="Bingen E."/>
            <person name="Bonacorsi S."/>
            <person name="Bouchier C."/>
            <person name="Bouvet O."/>
            <person name="Calteau A."/>
            <person name="Chiapello H."/>
            <person name="Clermont O."/>
            <person name="Cruveiller S."/>
            <person name="Danchin A."/>
            <person name="Diard M."/>
            <person name="Dossat C."/>
            <person name="Karoui M.E."/>
            <person name="Frapy E."/>
            <person name="Garry L."/>
            <person name="Ghigo J.M."/>
            <person name="Gilles A.M."/>
            <person name="Johnson J."/>
            <person name="Le Bouguenec C."/>
            <person name="Lescat M."/>
            <person name="Mangenot S."/>
            <person name="Martinez-Jehanne V."/>
            <person name="Matic I."/>
            <person name="Nassif X."/>
            <person name="Oztas S."/>
            <person name="Petit M.A."/>
            <person name="Pichon C."/>
            <person name="Rouy Z."/>
            <person name="Ruf C.S."/>
            <person name="Schneider D."/>
            <person name="Tourret J."/>
            <person name="Vacherie B."/>
            <person name="Vallenet D."/>
            <person name="Medigue C."/>
            <person name="Rocha E.P.C."/>
            <person name="Denamur E."/>
        </authorList>
    </citation>
    <scope>NUCLEOTIDE SEQUENCE [LARGE SCALE GENOMIC DNA]</scope>
    <source>
        <strain>ATCC 35469 / DSM 13698 / BCRC 15582 / CCUG 18766 / IAM 14443 / JCM 21226 / LMG 7866 / NBRC 102419 / NCTC 12128 / CDC 0568-73</strain>
    </source>
</reference>
<gene>
    <name evidence="1" type="primary">rsmA</name>
    <name evidence="1" type="synonym">ksgA</name>
    <name type="ordered locus">EFER_0062</name>
</gene>
<organism>
    <name type="scientific">Escherichia fergusonii (strain ATCC 35469 / DSM 13698 / CCUG 18766 / IAM 14443 / JCM 21226 / LMG 7866 / NBRC 102419 / NCTC 12128 / CDC 0568-73)</name>
    <dbReference type="NCBI Taxonomy" id="585054"/>
    <lineage>
        <taxon>Bacteria</taxon>
        <taxon>Pseudomonadati</taxon>
        <taxon>Pseudomonadota</taxon>
        <taxon>Gammaproteobacteria</taxon>
        <taxon>Enterobacterales</taxon>
        <taxon>Enterobacteriaceae</taxon>
        <taxon>Escherichia</taxon>
    </lineage>
</organism>
<keyword id="KW-0963">Cytoplasm</keyword>
<keyword id="KW-0489">Methyltransferase</keyword>
<keyword id="KW-0694">RNA-binding</keyword>
<keyword id="KW-0698">rRNA processing</keyword>
<keyword id="KW-0949">S-adenosyl-L-methionine</keyword>
<keyword id="KW-0808">Transferase</keyword>